<sequence length="239" mass="26357">MTVEAFISALNDAGITLTEQQIEQFQRYFELLVEANKQFNLTAITDEKDVYLKHFYDSLTVAIYVKALQHQSSTLIDVGTGAGFPSLPLKIAFPQLKITMVDALQKRVRFLQDVVDTLDLKNVSIVHGRAEDIGQNVAYREQFDFATARALARTSVLAEYTLPFVKVGGALLVMKGAAAEQELADGQQALATLGGTLSSAFDFKLPNGDQRVIQVVDKHKKTPKKYPRQAGTPNKKPIA</sequence>
<feature type="chain" id="PRO_0000342924" description="Ribosomal RNA small subunit methyltransferase G">
    <location>
        <begin position="1"/>
        <end position="239"/>
    </location>
</feature>
<feature type="region of interest" description="Disordered" evidence="2">
    <location>
        <begin position="218"/>
        <end position="239"/>
    </location>
</feature>
<feature type="compositionally biased region" description="Basic residues" evidence="2">
    <location>
        <begin position="218"/>
        <end position="227"/>
    </location>
</feature>
<feature type="binding site" evidence="1">
    <location>
        <position position="79"/>
    </location>
    <ligand>
        <name>S-adenosyl-L-methionine</name>
        <dbReference type="ChEBI" id="CHEBI:59789"/>
    </ligand>
</feature>
<feature type="binding site" evidence="1">
    <location>
        <position position="84"/>
    </location>
    <ligand>
        <name>S-adenosyl-L-methionine</name>
        <dbReference type="ChEBI" id="CHEBI:59789"/>
    </ligand>
</feature>
<feature type="binding site" evidence="1">
    <location>
        <begin position="130"/>
        <end position="131"/>
    </location>
    <ligand>
        <name>S-adenosyl-L-methionine</name>
        <dbReference type="ChEBI" id="CHEBI:59789"/>
    </ligand>
</feature>
<feature type="binding site" evidence="1">
    <location>
        <position position="149"/>
    </location>
    <ligand>
        <name>S-adenosyl-L-methionine</name>
        <dbReference type="ChEBI" id="CHEBI:59789"/>
    </ligand>
</feature>
<evidence type="ECO:0000255" key="1">
    <source>
        <dbReference type="HAMAP-Rule" id="MF_00074"/>
    </source>
</evidence>
<evidence type="ECO:0000256" key="2">
    <source>
        <dbReference type="SAM" id="MobiDB-lite"/>
    </source>
</evidence>
<organism>
    <name type="scientific">Leuconostoc citreum (strain KM20)</name>
    <dbReference type="NCBI Taxonomy" id="349519"/>
    <lineage>
        <taxon>Bacteria</taxon>
        <taxon>Bacillati</taxon>
        <taxon>Bacillota</taxon>
        <taxon>Bacilli</taxon>
        <taxon>Lactobacillales</taxon>
        <taxon>Lactobacillaceae</taxon>
        <taxon>Leuconostoc</taxon>
    </lineage>
</organism>
<accession>B1MX30</accession>
<proteinExistence type="inferred from homology"/>
<name>RSMG_LEUCK</name>
<gene>
    <name evidence="1" type="primary">rsmG</name>
    <name type="ordered locus">LCK_00249</name>
</gene>
<reference key="1">
    <citation type="journal article" date="2008" name="J. Bacteriol.">
        <title>Complete genome sequence of Leuconostoc citreum KM20.</title>
        <authorList>
            <person name="Kim J.F."/>
            <person name="Jeong H."/>
            <person name="Lee J.-S."/>
            <person name="Choi S.-H."/>
            <person name="Ha M."/>
            <person name="Hur C.-G."/>
            <person name="Kim J.-S."/>
            <person name="Lee S."/>
            <person name="Park H.-S."/>
            <person name="Park Y.-H."/>
            <person name="Oh T.K."/>
        </authorList>
    </citation>
    <scope>NUCLEOTIDE SEQUENCE [LARGE SCALE GENOMIC DNA]</scope>
    <source>
        <strain>KM20</strain>
    </source>
</reference>
<comment type="function">
    <text evidence="1">Specifically methylates the N7 position of a guanine in 16S rRNA.</text>
</comment>
<comment type="subcellular location">
    <subcellularLocation>
        <location evidence="1">Cytoplasm</location>
    </subcellularLocation>
</comment>
<comment type="similarity">
    <text evidence="1">Belongs to the methyltransferase superfamily. RNA methyltransferase RsmG family.</text>
</comment>
<protein>
    <recommendedName>
        <fullName evidence="1">Ribosomal RNA small subunit methyltransferase G</fullName>
        <ecNumber evidence="1">2.1.1.-</ecNumber>
    </recommendedName>
    <alternativeName>
        <fullName evidence="1">16S rRNA 7-methylguanosine methyltransferase</fullName>
        <shortName evidence="1">16S rRNA m7G methyltransferase</shortName>
    </alternativeName>
</protein>
<dbReference type="EC" id="2.1.1.-" evidence="1"/>
<dbReference type="EMBL" id="DQ489736">
    <property type="protein sequence ID" value="ACA82082.1"/>
    <property type="molecule type" value="Genomic_DNA"/>
</dbReference>
<dbReference type="RefSeq" id="WP_004907513.1">
    <property type="nucleotide sequence ID" value="NC_010471.1"/>
</dbReference>
<dbReference type="SMR" id="B1MX30"/>
<dbReference type="STRING" id="349519.LCK_00249"/>
<dbReference type="KEGG" id="lci:LCK_00249"/>
<dbReference type="eggNOG" id="COG0357">
    <property type="taxonomic scope" value="Bacteria"/>
</dbReference>
<dbReference type="HOGENOM" id="CLU_065341_0_0_9"/>
<dbReference type="OrthoDB" id="9808773at2"/>
<dbReference type="Proteomes" id="UP000002166">
    <property type="component" value="Chromosome"/>
</dbReference>
<dbReference type="GO" id="GO:0005829">
    <property type="term" value="C:cytosol"/>
    <property type="evidence" value="ECO:0007669"/>
    <property type="project" value="TreeGrafter"/>
</dbReference>
<dbReference type="GO" id="GO:0070043">
    <property type="term" value="F:rRNA (guanine-N7-)-methyltransferase activity"/>
    <property type="evidence" value="ECO:0007669"/>
    <property type="project" value="UniProtKB-UniRule"/>
</dbReference>
<dbReference type="CDD" id="cd02440">
    <property type="entry name" value="AdoMet_MTases"/>
    <property type="match status" value="1"/>
</dbReference>
<dbReference type="FunFam" id="3.40.50.150:FF:000041">
    <property type="entry name" value="Ribosomal RNA small subunit methyltransferase G"/>
    <property type="match status" value="1"/>
</dbReference>
<dbReference type="Gene3D" id="3.40.50.150">
    <property type="entry name" value="Vaccinia Virus protein VP39"/>
    <property type="match status" value="1"/>
</dbReference>
<dbReference type="HAMAP" id="MF_00074">
    <property type="entry name" value="16SrRNA_methyltr_G"/>
    <property type="match status" value="1"/>
</dbReference>
<dbReference type="InterPro" id="IPR003682">
    <property type="entry name" value="rRNA_ssu_MeTfrase_G"/>
</dbReference>
<dbReference type="InterPro" id="IPR029063">
    <property type="entry name" value="SAM-dependent_MTases_sf"/>
</dbReference>
<dbReference type="NCBIfam" id="TIGR00138">
    <property type="entry name" value="rsmG_gidB"/>
    <property type="match status" value="1"/>
</dbReference>
<dbReference type="PANTHER" id="PTHR31760">
    <property type="entry name" value="S-ADENOSYL-L-METHIONINE-DEPENDENT METHYLTRANSFERASES SUPERFAMILY PROTEIN"/>
    <property type="match status" value="1"/>
</dbReference>
<dbReference type="PANTHER" id="PTHR31760:SF0">
    <property type="entry name" value="S-ADENOSYL-L-METHIONINE-DEPENDENT METHYLTRANSFERASES SUPERFAMILY PROTEIN"/>
    <property type="match status" value="1"/>
</dbReference>
<dbReference type="Pfam" id="PF02527">
    <property type="entry name" value="GidB"/>
    <property type="match status" value="1"/>
</dbReference>
<dbReference type="SUPFAM" id="SSF53335">
    <property type="entry name" value="S-adenosyl-L-methionine-dependent methyltransferases"/>
    <property type="match status" value="1"/>
</dbReference>
<keyword id="KW-0963">Cytoplasm</keyword>
<keyword id="KW-0489">Methyltransferase</keyword>
<keyword id="KW-1185">Reference proteome</keyword>
<keyword id="KW-0698">rRNA processing</keyword>
<keyword id="KW-0949">S-adenosyl-L-methionine</keyword>
<keyword id="KW-0808">Transferase</keyword>